<comment type="function">
    <text evidence="1">Catalyzes the NADPH-dependent reduction of glutamyl-tRNA(Glu) to glutamate 1-semialdehyde (GSA).</text>
</comment>
<comment type="catalytic activity">
    <reaction evidence="1">
        <text>(S)-4-amino-5-oxopentanoate + tRNA(Glu) + NADP(+) = L-glutamyl-tRNA(Glu) + NADPH + H(+)</text>
        <dbReference type="Rhea" id="RHEA:12344"/>
        <dbReference type="Rhea" id="RHEA-COMP:9663"/>
        <dbReference type="Rhea" id="RHEA-COMP:9680"/>
        <dbReference type="ChEBI" id="CHEBI:15378"/>
        <dbReference type="ChEBI" id="CHEBI:57501"/>
        <dbReference type="ChEBI" id="CHEBI:57783"/>
        <dbReference type="ChEBI" id="CHEBI:58349"/>
        <dbReference type="ChEBI" id="CHEBI:78442"/>
        <dbReference type="ChEBI" id="CHEBI:78520"/>
        <dbReference type="EC" id="1.2.1.70"/>
    </reaction>
</comment>
<comment type="pathway">
    <text evidence="1">Porphyrin-containing compound metabolism; protoporphyrin-IX biosynthesis; 5-aminolevulinate from L-glutamyl-tRNA(Glu): step 1/2.</text>
</comment>
<comment type="subunit">
    <text evidence="1">Homodimer.</text>
</comment>
<comment type="domain">
    <text evidence="1">Possesses an unusual extended V-shaped dimeric structure with each monomer consisting of three distinct domains arranged along a curved 'spinal' alpha-helix. The N-terminal catalytic domain specifically recognizes the glutamate moiety of the substrate. The second domain is the NADPH-binding domain, and the third C-terminal domain is responsible for dimerization.</text>
</comment>
<comment type="miscellaneous">
    <text evidence="1">During catalysis, the active site Cys acts as a nucleophile attacking the alpha-carbonyl group of tRNA-bound glutamate with the formation of a thioester intermediate between enzyme and glutamate, and the concomitant release of tRNA(Glu). The thioester intermediate is finally reduced by direct hydride transfer from NADPH, to form the product GSA.</text>
</comment>
<comment type="similarity">
    <text evidence="1">Belongs to the glutamyl-tRNA reductase family.</text>
</comment>
<feature type="chain" id="PRO_0000335039" description="Glutamyl-tRNA reductase">
    <location>
        <begin position="1"/>
        <end position="473"/>
    </location>
</feature>
<feature type="region of interest" description="Disordered" evidence="2">
    <location>
        <begin position="196"/>
        <end position="215"/>
    </location>
</feature>
<feature type="active site" description="Nucleophile" evidence="1">
    <location>
        <position position="50"/>
    </location>
</feature>
<feature type="binding site" evidence="1">
    <location>
        <begin position="49"/>
        <end position="52"/>
    </location>
    <ligand>
        <name>substrate</name>
    </ligand>
</feature>
<feature type="binding site" evidence="1">
    <location>
        <position position="109"/>
    </location>
    <ligand>
        <name>substrate</name>
    </ligand>
</feature>
<feature type="binding site" evidence="1">
    <location>
        <begin position="114"/>
        <end position="116"/>
    </location>
    <ligand>
        <name>substrate</name>
    </ligand>
</feature>
<feature type="binding site" evidence="1">
    <location>
        <position position="120"/>
    </location>
    <ligand>
        <name>substrate</name>
    </ligand>
</feature>
<feature type="binding site" evidence="1">
    <location>
        <begin position="226"/>
        <end position="231"/>
    </location>
    <ligand>
        <name>NADP(+)</name>
        <dbReference type="ChEBI" id="CHEBI:58349"/>
    </ligand>
</feature>
<feature type="site" description="Important for activity" evidence="1">
    <location>
        <position position="99"/>
    </location>
</feature>
<protein>
    <recommendedName>
        <fullName evidence="1">Glutamyl-tRNA reductase</fullName>
        <shortName evidence="1">GluTR</shortName>
        <ecNumber evidence="1">1.2.1.70</ecNumber>
    </recommendedName>
</protein>
<name>HEM1_FRACC</name>
<organism>
    <name type="scientific">Frankia casuarinae (strain DSM 45818 / CECT 9043 / HFP020203 / CcI3)</name>
    <dbReference type="NCBI Taxonomy" id="106370"/>
    <lineage>
        <taxon>Bacteria</taxon>
        <taxon>Bacillati</taxon>
        <taxon>Actinomycetota</taxon>
        <taxon>Actinomycetes</taxon>
        <taxon>Frankiales</taxon>
        <taxon>Frankiaceae</taxon>
        <taxon>Frankia</taxon>
    </lineage>
</organism>
<accession>Q2JFS1</accession>
<dbReference type="EC" id="1.2.1.70" evidence="1"/>
<dbReference type="EMBL" id="CP000249">
    <property type="protein sequence ID" value="ABD09871.1"/>
    <property type="molecule type" value="Genomic_DNA"/>
</dbReference>
<dbReference type="RefSeq" id="WP_011434947.1">
    <property type="nucleotide sequence ID" value="NZ_JENI01000064.1"/>
</dbReference>
<dbReference type="SMR" id="Q2JFS1"/>
<dbReference type="STRING" id="106370.Francci3_0485"/>
<dbReference type="KEGG" id="fra:Francci3_0485"/>
<dbReference type="eggNOG" id="COG0373">
    <property type="taxonomic scope" value="Bacteria"/>
</dbReference>
<dbReference type="HOGENOM" id="CLU_035113_4_0_11"/>
<dbReference type="OrthoDB" id="110209at2"/>
<dbReference type="PhylomeDB" id="Q2JFS1"/>
<dbReference type="UniPathway" id="UPA00251">
    <property type="reaction ID" value="UER00316"/>
</dbReference>
<dbReference type="Proteomes" id="UP000001937">
    <property type="component" value="Chromosome"/>
</dbReference>
<dbReference type="GO" id="GO:0008883">
    <property type="term" value="F:glutamyl-tRNA reductase activity"/>
    <property type="evidence" value="ECO:0007669"/>
    <property type="project" value="UniProtKB-UniRule"/>
</dbReference>
<dbReference type="GO" id="GO:0050661">
    <property type="term" value="F:NADP binding"/>
    <property type="evidence" value="ECO:0007669"/>
    <property type="project" value="InterPro"/>
</dbReference>
<dbReference type="GO" id="GO:0019353">
    <property type="term" value="P:protoporphyrinogen IX biosynthetic process from glutamate"/>
    <property type="evidence" value="ECO:0007669"/>
    <property type="project" value="TreeGrafter"/>
</dbReference>
<dbReference type="CDD" id="cd05213">
    <property type="entry name" value="NAD_bind_Glutamyl_tRNA_reduct"/>
    <property type="match status" value="1"/>
</dbReference>
<dbReference type="FunFam" id="3.30.460.30:FF:000001">
    <property type="entry name" value="Glutamyl-tRNA reductase"/>
    <property type="match status" value="1"/>
</dbReference>
<dbReference type="Gene3D" id="3.30.460.30">
    <property type="entry name" value="Glutamyl-tRNA reductase, N-terminal domain"/>
    <property type="match status" value="1"/>
</dbReference>
<dbReference type="Gene3D" id="3.40.50.720">
    <property type="entry name" value="NAD(P)-binding Rossmann-like Domain"/>
    <property type="match status" value="1"/>
</dbReference>
<dbReference type="HAMAP" id="MF_00087">
    <property type="entry name" value="Glu_tRNA_reductase"/>
    <property type="match status" value="1"/>
</dbReference>
<dbReference type="InterPro" id="IPR000343">
    <property type="entry name" value="4pyrrol_synth_GluRdtase"/>
</dbReference>
<dbReference type="InterPro" id="IPR015896">
    <property type="entry name" value="4pyrrol_synth_GluRdtase_dimer"/>
</dbReference>
<dbReference type="InterPro" id="IPR015895">
    <property type="entry name" value="4pyrrol_synth_GluRdtase_N"/>
</dbReference>
<dbReference type="InterPro" id="IPR018214">
    <property type="entry name" value="GluRdtase_CS"/>
</dbReference>
<dbReference type="InterPro" id="IPR036453">
    <property type="entry name" value="GluRdtase_dimer_dom_sf"/>
</dbReference>
<dbReference type="InterPro" id="IPR036343">
    <property type="entry name" value="GluRdtase_N_sf"/>
</dbReference>
<dbReference type="InterPro" id="IPR036291">
    <property type="entry name" value="NAD(P)-bd_dom_sf"/>
</dbReference>
<dbReference type="InterPro" id="IPR006151">
    <property type="entry name" value="Shikm_DH/Glu-tRNA_Rdtase"/>
</dbReference>
<dbReference type="NCBIfam" id="NF000744">
    <property type="entry name" value="PRK00045.1-3"/>
    <property type="match status" value="1"/>
</dbReference>
<dbReference type="PANTHER" id="PTHR43013">
    <property type="entry name" value="GLUTAMYL-TRNA REDUCTASE"/>
    <property type="match status" value="1"/>
</dbReference>
<dbReference type="PANTHER" id="PTHR43013:SF1">
    <property type="entry name" value="GLUTAMYL-TRNA REDUCTASE"/>
    <property type="match status" value="1"/>
</dbReference>
<dbReference type="Pfam" id="PF00745">
    <property type="entry name" value="GlutR_dimer"/>
    <property type="match status" value="1"/>
</dbReference>
<dbReference type="Pfam" id="PF05201">
    <property type="entry name" value="GlutR_N"/>
    <property type="match status" value="1"/>
</dbReference>
<dbReference type="Pfam" id="PF01488">
    <property type="entry name" value="Shikimate_DH"/>
    <property type="match status" value="1"/>
</dbReference>
<dbReference type="PIRSF" id="PIRSF000445">
    <property type="entry name" value="4pyrrol_synth_GluRdtase"/>
    <property type="match status" value="1"/>
</dbReference>
<dbReference type="SUPFAM" id="SSF69742">
    <property type="entry name" value="Glutamyl tRNA-reductase catalytic, N-terminal domain"/>
    <property type="match status" value="1"/>
</dbReference>
<dbReference type="SUPFAM" id="SSF69075">
    <property type="entry name" value="Glutamyl tRNA-reductase dimerization domain"/>
    <property type="match status" value="1"/>
</dbReference>
<dbReference type="SUPFAM" id="SSF51735">
    <property type="entry name" value="NAD(P)-binding Rossmann-fold domains"/>
    <property type="match status" value="1"/>
</dbReference>
<dbReference type="PROSITE" id="PS00747">
    <property type="entry name" value="GLUTR"/>
    <property type="match status" value="1"/>
</dbReference>
<reference key="1">
    <citation type="journal article" date="2007" name="Genome Res.">
        <title>Genome characteristics of facultatively symbiotic Frankia sp. strains reflect host range and host plant biogeography.</title>
        <authorList>
            <person name="Normand P."/>
            <person name="Lapierre P."/>
            <person name="Tisa L.S."/>
            <person name="Gogarten J.P."/>
            <person name="Alloisio N."/>
            <person name="Bagnarol E."/>
            <person name="Bassi C.A."/>
            <person name="Berry A.M."/>
            <person name="Bickhart D.M."/>
            <person name="Choisne N."/>
            <person name="Couloux A."/>
            <person name="Cournoyer B."/>
            <person name="Cruveiller S."/>
            <person name="Daubin V."/>
            <person name="Demange N."/>
            <person name="Francino M.P."/>
            <person name="Goltsman E."/>
            <person name="Huang Y."/>
            <person name="Kopp O.R."/>
            <person name="Labarre L."/>
            <person name="Lapidus A."/>
            <person name="Lavire C."/>
            <person name="Marechal J."/>
            <person name="Martinez M."/>
            <person name="Mastronunzio J.E."/>
            <person name="Mullin B.C."/>
            <person name="Niemann J."/>
            <person name="Pujic P."/>
            <person name="Rawnsley T."/>
            <person name="Rouy Z."/>
            <person name="Schenowitz C."/>
            <person name="Sellstedt A."/>
            <person name="Tavares F."/>
            <person name="Tomkins J.P."/>
            <person name="Vallenet D."/>
            <person name="Valverde C."/>
            <person name="Wall L.G."/>
            <person name="Wang Y."/>
            <person name="Medigue C."/>
            <person name="Benson D.R."/>
        </authorList>
    </citation>
    <scope>NUCLEOTIDE SEQUENCE [LARGE SCALE GENOMIC DNA]</scope>
    <source>
        <strain>DSM 45818 / CECT 9043 / HFP020203 / CcI3</strain>
    </source>
</reference>
<gene>
    <name evidence="1" type="primary">hemA</name>
    <name type="ordered locus">Francci3_0485</name>
</gene>
<proteinExistence type="inferred from homology"/>
<sequence>MSLLVVGLNHQTAPTSLLERTSVSAEDIPKVLHDLAEGTHVSEAVVLSTCNRIEIYAEVETFHGGVADISDQLSRICGIDLGDLAGHLYVHHEARAIGHLFSVVCGLDSMLVGESQILGQVRTAFRAGQAAGVAGSALSGLFQAALRVGKRAHSETSIDAAGASIVSVGVRLAASGLGLHSEVPAVPVAPPGGRALDGGGVAAEGPRHAVTPEPPPLAGTRVLLIGAGAVGSLAAQTVRRAGAGEVVIANRTAARAARVAEAHEARVVGLTDLAHEITMADLVISSTGASGLVVEHELVAAALPGRAGRPLVFLDLALPHDIDPGVRELPGVSLIDLDALRIALDGAQVTHDVEAVRALVAAEVASFLDRRRAGRVAPTVVALRAHAAAVVRSELARLHTRLPDLDDREWSLVEGSVRRVVDKLLHAPTVRVQELAGAPGGDAYAEALRELFDLPREVPAVVSAPDLDLLERS</sequence>
<keyword id="KW-0521">NADP</keyword>
<keyword id="KW-0560">Oxidoreductase</keyword>
<keyword id="KW-0627">Porphyrin biosynthesis</keyword>
<keyword id="KW-1185">Reference proteome</keyword>
<evidence type="ECO:0000255" key="1">
    <source>
        <dbReference type="HAMAP-Rule" id="MF_00087"/>
    </source>
</evidence>
<evidence type="ECO:0000256" key="2">
    <source>
        <dbReference type="SAM" id="MobiDB-lite"/>
    </source>
</evidence>